<accession>B3DHU2</accession>
<dbReference type="EMBL" id="CABZ01067086">
    <property type="status" value="NOT_ANNOTATED_CDS"/>
    <property type="molecule type" value="Genomic_DNA"/>
</dbReference>
<dbReference type="EMBL" id="BC162888">
    <property type="protein sequence ID" value="AAI62888.1"/>
    <property type="molecule type" value="mRNA"/>
</dbReference>
<dbReference type="RefSeq" id="NP_001122284.1">
    <property type="nucleotide sequence ID" value="NM_001128812.1"/>
</dbReference>
<dbReference type="FunCoup" id="B3DHU2">
    <property type="interactions" value="182"/>
</dbReference>
<dbReference type="STRING" id="7955.ENSDARP00000100142"/>
<dbReference type="PaxDb" id="7955-ENSDARP00000100142"/>
<dbReference type="PeptideAtlas" id="B3DHU2"/>
<dbReference type="Ensembl" id="ENSDART00000111580">
    <property type="protein sequence ID" value="ENSDARP00000100142"/>
    <property type="gene ID" value="ENSDARG00000076393"/>
</dbReference>
<dbReference type="GeneID" id="100005403"/>
<dbReference type="KEGG" id="dre:100005403"/>
<dbReference type="AGR" id="ZFIN:ZDB-GENE-081022-99"/>
<dbReference type="CTD" id="157378"/>
<dbReference type="ZFIN" id="ZDB-GENE-081022-99">
    <property type="gene designation" value="tmem65"/>
</dbReference>
<dbReference type="eggNOG" id="KOG4619">
    <property type="taxonomic scope" value="Eukaryota"/>
</dbReference>
<dbReference type="HOGENOM" id="CLU_075402_1_0_1"/>
<dbReference type="InParanoid" id="B3DHU2"/>
<dbReference type="OMA" id="CCWMGTH"/>
<dbReference type="OrthoDB" id="430821at2759"/>
<dbReference type="PhylomeDB" id="B3DHU2"/>
<dbReference type="TreeFam" id="TF105823"/>
<dbReference type="PRO" id="PR:B3DHU2"/>
<dbReference type="Proteomes" id="UP000000437">
    <property type="component" value="Chromosome 19"/>
</dbReference>
<dbReference type="Bgee" id="ENSDARG00000076393">
    <property type="expression patterns" value="Expressed in retina and 21 other cell types or tissues"/>
</dbReference>
<dbReference type="GO" id="GO:0005743">
    <property type="term" value="C:mitochondrial inner membrane"/>
    <property type="evidence" value="ECO:0000250"/>
    <property type="project" value="UniProtKB"/>
</dbReference>
<dbReference type="GO" id="GO:0005739">
    <property type="term" value="C:mitochondrion"/>
    <property type="evidence" value="ECO:0000318"/>
    <property type="project" value="GO_Central"/>
</dbReference>
<dbReference type="GO" id="GO:0005886">
    <property type="term" value="C:plasma membrane"/>
    <property type="evidence" value="ECO:0007669"/>
    <property type="project" value="UniProtKB-SubCell"/>
</dbReference>
<dbReference type="GO" id="GO:0061337">
    <property type="term" value="P:cardiac conduction"/>
    <property type="evidence" value="ECO:0000250"/>
    <property type="project" value="UniProtKB"/>
</dbReference>
<dbReference type="GO" id="GO:0003231">
    <property type="term" value="P:cardiac ventricle development"/>
    <property type="evidence" value="ECO:0000315"/>
    <property type="project" value="UniProtKB"/>
</dbReference>
<dbReference type="GO" id="GO:0007507">
    <property type="term" value="P:heart development"/>
    <property type="evidence" value="ECO:0000315"/>
    <property type="project" value="ZFIN"/>
</dbReference>
<dbReference type="GO" id="GO:1903779">
    <property type="term" value="P:regulation of cardiac conduction"/>
    <property type="evidence" value="ECO:0000315"/>
    <property type="project" value="UniProtKB"/>
</dbReference>
<dbReference type="InterPro" id="IPR019537">
    <property type="entry name" value="TMEM65"/>
</dbReference>
<dbReference type="PANTHER" id="PTHR21706">
    <property type="entry name" value="TRANSMEMBRANE PROTEIN 65"/>
    <property type="match status" value="1"/>
</dbReference>
<dbReference type="PANTHER" id="PTHR21706:SF15">
    <property type="entry name" value="TRANSMEMBRANE PROTEIN 65"/>
    <property type="match status" value="1"/>
</dbReference>
<dbReference type="Pfam" id="PF10507">
    <property type="entry name" value="TMEM65"/>
    <property type="match status" value="1"/>
</dbReference>
<feature type="chain" id="PRO_0000435274" description="Transmembrane protein 65">
    <location>
        <begin position="1"/>
        <end position="212"/>
    </location>
</feature>
<feature type="topological domain" description="Cytoplasmic" evidence="2">
    <location>
        <begin position="1"/>
        <end position="88"/>
    </location>
</feature>
<feature type="transmembrane region" description="Helical" evidence="3">
    <location>
        <begin position="89"/>
        <end position="109"/>
    </location>
</feature>
<feature type="topological domain" description="Extracellular" evidence="2">
    <location>
        <begin position="110"/>
        <end position="116"/>
    </location>
</feature>
<feature type="transmembrane region" description="Helical" evidence="3">
    <location>
        <begin position="117"/>
        <end position="137"/>
    </location>
</feature>
<feature type="topological domain" description="Cytoplasmic" evidence="2">
    <location>
        <begin position="138"/>
        <end position="139"/>
    </location>
</feature>
<feature type="transmembrane region" description="Helical" evidence="3">
    <location>
        <begin position="140"/>
        <end position="160"/>
    </location>
</feature>
<feature type="topological domain" description="Extracellular" evidence="2">
    <location>
        <begin position="161"/>
        <end position="178"/>
    </location>
</feature>
<feature type="transmembrane region" description="Helical" evidence="3">
    <location>
        <begin position="179"/>
        <end position="199"/>
    </location>
</feature>
<feature type="topological domain" description="Cytoplasmic" evidence="2">
    <location>
        <begin position="200"/>
        <end position="212"/>
    </location>
</feature>
<name>TMM65_DANRE</name>
<protein>
    <recommendedName>
        <fullName>Transmembrane protein 65</fullName>
    </recommendedName>
</protein>
<gene>
    <name type="primary">tmem65</name>
</gene>
<comment type="function">
    <text evidence="2 4">Essential for maintaining proper cardiac intercalated disk (ICD) structure and function (By similarity). May regulate cardiac conduction and the function of the gap junction protein GJA1. May contribute to the stability and proper localization of GJA1 to cardiac intercalated disk thereby regulating gap junction communication (PubMed:26403541). Regulates mitochondrial respiration and mitochondrial DNA copy number maintenance (By similarity).</text>
</comment>
<comment type="subunit">
    <text evidence="1">Monomer. Homodimer. Interacts with GJA1.</text>
</comment>
<comment type="subcellular location">
    <subcellularLocation>
        <location evidence="1">Cell membrane</location>
        <topology evidence="3">Multi-pass membrane protein</topology>
    </subcellularLocation>
    <subcellularLocation>
        <location evidence="2">Mitochondrion inner membrane</location>
        <topology evidence="3">Multi-pass membrane protein</topology>
    </subcellularLocation>
    <text evidence="1">Localizes at the intercalated disk in ventricular tissue and cardiomyocytes.</text>
</comment>
<comment type="tissue specificity">
    <text evidence="4">Expression is restricted to the heart (at protein level).</text>
</comment>
<comment type="disruption phenotype">
    <text evidence="4">Morpholino knockdown of the protein causes pericardial edema and altered cardiac morphology in 4 days post-fertilization (dpf) embryos and severity increases as embryos age. Morrphants are not viable by 7 dpf. Hearts showed abnormal cardiac looping in the morphants and a significant decline in heart beat rates seen in after 4.5 dpf and continue decreasing at 5 and 6 dpf. Ventricles show a significant reduction in amplitude of Ca(2+) transients in morphants between 4 and 6 dpf.</text>
</comment>
<sequence length="212" mass="23070">MIRSVLLRALAARPPSAPVPGHLHRCLLGTHRRKIKPEQLELPNQTREFVYSLSPETRSRLLKELQTFESKTEDSGEASRLTAAQLRYILLHNAIPFIGFGFLDNAIMIAAGTQIELSIGLTLGISTMAAAALGNLVSDLAGLGLAGYVEALAVRLGMQIPDLSPRQVDMWQTRVSSHMGKAIGVAIGCILGMFPLLFLSDEEDKKPKKDSN</sequence>
<keyword id="KW-1003">Cell membrane</keyword>
<keyword id="KW-0472">Membrane</keyword>
<keyword id="KW-0496">Mitochondrion</keyword>
<keyword id="KW-0999">Mitochondrion inner membrane</keyword>
<keyword id="KW-1185">Reference proteome</keyword>
<keyword id="KW-0812">Transmembrane</keyword>
<keyword id="KW-1133">Transmembrane helix</keyword>
<proteinExistence type="evidence at protein level"/>
<reference key="1">
    <citation type="journal article" date="2013" name="Nature">
        <title>The zebrafish reference genome sequence and its relationship to the human genome.</title>
        <authorList>
            <person name="Howe K."/>
            <person name="Clark M.D."/>
            <person name="Torroja C.F."/>
            <person name="Torrance J."/>
            <person name="Berthelot C."/>
            <person name="Muffato M."/>
            <person name="Collins J.E."/>
            <person name="Humphray S."/>
            <person name="McLaren K."/>
            <person name="Matthews L."/>
            <person name="McLaren S."/>
            <person name="Sealy I."/>
            <person name="Caccamo M."/>
            <person name="Churcher C."/>
            <person name="Scott C."/>
            <person name="Barrett J.C."/>
            <person name="Koch R."/>
            <person name="Rauch G.J."/>
            <person name="White S."/>
            <person name="Chow W."/>
            <person name="Kilian B."/>
            <person name="Quintais L.T."/>
            <person name="Guerra-Assuncao J.A."/>
            <person name="Zhou Y."/>
            <person name="Gu Y."/>
            <person name="Yen J."/>
            <person name="Vogel J.H."/>
            <person name="Eyre T."/>
            <person name="Redmond S."/>
            <person name="Banerjee R."/>
            <person name="Chi J."/>
            <person name="Fu B."/>
            <person name="Langley E."/>
            <person name="Maguire S.F."/>
            <person name="Laird G.K."/>
            <person name="Lloyd D."/>
            <person name="Kenyon E."/>
            <person name="Donaldson S."/>
            <person name="Sehra H."/>
            <person name="Almeida-King J."/>
            <person name="Loveland J."/>
            <person name="Trevanion S."/>
            <person name="Jones M."/>
            <person name="Quail M."/>
            <person name="Willey D."/>
            <person name="Hunt A."/>
            <person name="Burton J."/>
            <person name="Sims S."/>
            <person name="McLay K."/>
            <person name="Plumb B."/>
            <person name="Davis J."/>
            <person name="Clee C."/>
            <person name="Oliver K."/>
            <person name="Clark R."/>
            <person name="Riddle C."/>
            <person name="Elliot D."/>
            <person name="Threadgold G."/>
            <person name="Harden G."/>
            <person name="Ware D."/>
            <person name="Begum S."/>
            <person name="Mortimore B."/>
            <person name="Kerry G."/>
            <person name="Heath P."/>
            <person name="Phillimore B."/>
            <person name="Tracey A."/>
            <person name="Corby N."/>
            <person name="Dunn M."/>
            <person name="Johnson C."/>
            <person name="Wood J."/>
            <person name="Clark S."/>
            <person name="Pelan S."/>
            <person name="Griffiths G."/>
            <person name="Smith M."/>
            <person name="Glithero R."/>
            <person name="Howden P."/>
            <person name="Barker N."/>
            <person name="Lloyd C."/>
            <person name="Stevens C."/>
            <person name="Harley J."/>
            <person name="Holt K."/>
            <person name="Panagiotidis G."/>
            <person name="Lovell J."/>
            <person name="Beasley H."/>
            <person name="Henderson C."/>
            <person name="Gordon D."/>
            <person name="Auger K."/>
            <person name="Wright D."/>
            <person name="Collins J."/>
            <person name="Raisen C."/>
            <person name="Dyer L."/>
            <person name="Leung K."/>
            <person name="Robertson L."/>
            <person name="Ambridge K."/>
            <person name="Leongamornlert D."/>
            <person name="McGuire S."/>
            <person name="Gilderthorp R."/>
            <person name="Griffiths C."/>
            <person name="Manthravadi D."/>
            <person name="Nichol S."/>
            <person name="Barker G."/>
            <person name="Whitehead S."/>
            <person name="Kay M."/>
            <person name="Brown J."/>
            <person name="Murnane C."/>
            <person name="Gray E."/>
            <person name="Humphries M."/>
            <person name="Sycamore N."/>
            <person name="Barker D."/>
            <person name="Saunders D."/>
            <person name="Wallis J."/>
            <person name="Babbage A."/>
            <person name="Hammond S."/>
            <person name="Mashreghi-Mohammadi M."/>
            <person name="Barr L."/>
            <person name="Martin S."/>
            <person name="Wray P."/>
            <person name="Ellington A."/>
            <person name="Matthews N."/>
            <person name="Ellwood M."/>
            <person name="Woodmansey R."/>
            <person name="Clark G."/>
            <person name="Cooper J."/>
            <person name="Tromans A."/>
            <person name="Grafham D."/>
            <person name="Skuce C."/>
            <person name="Pandian R."/>
            <person name="Andrews R."/>
            <person name="Harrison E."/>
            <person name="Kimberley A."/>
            <person name="Garnett J."/>
            <person name="Fosker N."/>
            <person name="Hall R."/>
            <person name="Garner P."/>
            <person name="Kelly D."/>
            <person name="Bird C."/>
            <person name="Palmer S."/>
            <person name="Gehring I."/>
            <person name="Berger A."/>
            <person name="Dooley C.M."/>
            <person name="Ersan-Urun Z."/>
            <person name="Eser C."/>
            <person name="Geiger H."/>
            <person name="Geisler M."/>
            <person name="Karotki L."/>
            <person name="Kirn A."/>
            <person name="Konantz J."/>
            <person name="Konantz M."/>
            <person name="Oberlander M."/>
            <person name="Rudolph-Geiger S."/>
            <person name="Teucke M."/>
            <person name="Lanz C."/>
            <person name="Raddatz G."/>
            <person name="Osoegawa K."/>
            <person name="Zhu B."/>
            <person name="Rapp A."/>
            <person name="Widaa S."/>
            <person name="Langford C."/>
            <person name="Yang F."/>
            <person name="Schuster S.C."/>
            <person name="Carter N.P."/>
            <person name="Harrow J."/>
            <person name="Ning Z."/>
            <person name="Herrero J."/>
            <person name="Searle S.M."/>
            <person name="Enright A."/>
            <person name="Geisler R."/>
            <person name="Plasterk R.H."/>
            <person name="Lee C."/>
            <person name="Westerfield M."/>
            <person name="de Jong P.J."/>
            <person name="Zon L.I."/>
            <person name="Postlethwait J.H."/>
            <person name="Nusslein-Volhard C."/>
            <person name="Hubbard T.J."/>
            <person name="Roest Crollius H."/>
            <person name="Rogers J."/>
            <person name="Stemple D.L."/>
        </authorList>
    </citation>
    <scope>NUCLEOTIDE SEQUENCE [LARGE SCALE GENOMIC DNA]</scope>
    <source>
        <strain>Tuebingen</strain>
    </source>
</reference>
<reference key="2">
    <citation type="submission" date="2008-04" db="EMBL/GenBank/DDBJ databases">
        <authorList>
            <consortium name="NIH - Zebrafish Gene Collection (ZGC) project"/>
        </authorList>
    </citation>
    <scope>NUCLEOTIDE SEQUENCE [LARGE SCALE MRNA]</scope>
</reference>
<reference key="3">
    <citation type="journal article" date="2015" name="Nat. Commun.">
        <title>Evolutionarily conserved intercalated disc protein Tmem65 regulates cardiac conduction and connexin 43 function.</title>
        <authorList>
            <person name="Sharma P."/>
            <person name="Abbasi C."/>
            <person name="Lazic S."/>
            <person name="Teng A.C."/>
            <person name="Wang D."/>
            <person name="Dubois N."/>
            <person name="Ignatchenko V."/>
            <person name="Wong V."/>
            <person name="Liu J."/>
            <person name="Araki T."/>
            <person name="Tiburcy M."/>
            <person name="Ackerley C."/>
            <person name="Zimmermann W.H."/>
            <person name="Hamilton R."/>
            <person name="Sun Y."/>
            <person name="Liu P.P."/>
            <person name="Keller G."/>
            <person name="Stagljar I."/>
            <person name="Scott I.C."/>
            <person name="Kislinger T."/>
            <person name="Gramolini A.O."/>
        </authorList>
    </citation>
    <scope>FUNCTION</scope>
    <scope>TISSUE SPECIFICITY</scope>
    <scope>DISRUPTION PHENOTYPE</scope>
</reference>
<organism>
    <name type="scientific">Danio rerio</name>
    <name type="common">Zebrafish</name>
    <name type="synonym">Brachydanio rerio</name>
    <dbReference type="NCBI Taxonomy" id="7955"/>
    <lineage>
        <taxon>Eukaryota</taxon>
        <taxon>Metazoa</taxon>
        <taxon>Chordata</taxon>
        <taxon>Craniata</taxon>
        <taxon>Vertebrata</taxon>
        <taxon>Euteleostomi</taxon>
        <taxon>Actinopterygii</taxon>
        <taxon>Neopterygii</taxon>
        <taxon>Teleostei</taxon>
        <taxon>Ostariophysi</taxon>
        <taxon>Cypriniformes</taxon>
        <taxon>Danionidae</taxon>
        <taxon>Danioninae</taxon>
        <taxon>Danio</taxon>
    </lineage>
</organism>
<evidence type="ECO:0000250" key="1">
    <source>
        <dbReference type="UniProtKB" id="Q4VAE3"/>
    </source>
</evidence>
<evidence type="ECO:0000250" key="2">
    <source>
        <dbReference type="UniProtKB" id="Q6PI78"/>
    </source>
</evidence>
<evidence type="ECO:0000255" key="3"/>
<evidence type="ECO:0000269" key="4">
    <source>
    </source>
</evidence>